<feature type="chain" id="PRO_0000451105" description="DCD domain-containing protein NRP">
    <location>
        <begin position="1"/>
        <end position="349"/>
    </location>
</feature>
<feature type="domain" description="DCD" evidence="1">
    <location>
        <begin position="214"/>
        <end position="346"/>
    </location>
</feature>
<feature type="region of interest" description="Disordered" evidence="2">
    <location>
        <begin position="157"/>
        <end position="201"/>
    </location>
</feature>
<feature type="compositionally biased region" description="Basic and acidic residues" evidence="2">
    <location>
        <begin position="188"/>
        <end position="201"/>
    </location>
</feature>
<protein>
    <recommendedName>
        <fullName evidence="9">DCD domain-containing protein NRP</fullName>
    </recommendedName>
    <alternativeName>
        <fullName evidence="8">Asparagine-rich protein</fullName>
        <shortName evidence="8">N-rich protein</shortName>
    </alternativeName>
    <alternativeName>
        <fullName evidence="7">GDA1-like protein</fullName>
    </alternativeName>
</protein>
<comment type="function">
    <text evidence="6 10">Contributes to the initial phase of responses to abiotic and biotic stress signals (Probable). Binds FYPP3 and facilitates FYPP3 degradation to promote abscisic acid (ABA) response (PubMed:29175650).</text>
</comment>
<comment type="subunit">
    <text evidence="5 6">Interacts with CRY2 in the cytoplasm (PubMed:28633330). Interacts with Verticillium dahliae PevD1 (PubMed:28633330). Interacts with FYPP3 (PubMed:29175650).</text>
</comment>
<comment type="subcellular location">
    <subcellularLocation>
        <location evidence="4 5">Cytoplasm</location>
    </subcellularLocation>
</comment>
<comment type="tissue specificity">
    <text evidence="4">Highly expressed in sensecent leaves, cauline leaves and sepals (PubMed:21277785). Expressed in the shoot apical meristem, leaf veins, central cylinder, root hair zone, root tips, rosette leaves, flowers and siliques (PubMed:21277785).</text>
</comment>
<comment type="induction">
    <text evidence="3 4 6">Induced by touch and salt stress (PubMed:16533544, PubMed:21277785). Induced by wounding, calcium, magnesium and methyl jasmonate (PubMed:16533544). Induced by osmotic stress, cycloheximide and ozone (PubMed:21277785). Induced by abscisic acid (ABA) (PubMed:29175650).</text>
</comment>
<comment type="disruption phenotype">
    <text evidence="4">Reduced length of primary root and increased sensitivity to salt stress.</text>
</comment>
<comment type="sequence caution" evidence="9">
    <conflict type="erroneous initiation">
        <sequence resource="EMBL-CDS" id="BAB08438"/>
    </conflict>
    <text>Truncated N-terminus.</text>
</comment>
<reference key="1">
    <citation type="journal article" date="1999" name="DNA Res.">
        <title>Structural analysis of Arabidopsis thaliana chromosome 5. IX. Sequence features of the regions of 1,011,550 bp covered by seventeen P1 and TAC clones.</title>
        <authorList>
            <person name="Kaneko T."/>
            <person name="Katoh T."/>
            <person name="Sato S."/>
            <person name="Nakamura Y."/>
            <person name="Asamizu E."/>
            <person name="Kotani H."/>
            <person name="Miyajima N."/>
            <person name="Tabata S."/>
        </authorList>
    </citation>
    <scope>NUCLEOTIDE SEQUENCE [LARGE SCALE GENOMIC DNA]</scope>
    <source>
        <strain>cv. Columbia</strain>
    </source>
</reference>
<reference key="2">
    <citation type="journal article" date="2017" name="Plant J.">
        <title>Araport11: a complete reannotation of the Arabidopsis thaliana reference genome.</title>
        <authorList>
            <person name="Cheng C.Y."/>
            <person name="Krishnakumar V."/>
            <person name="Chan A.P."/>
            <person name="Thibaud-Nissen F."/>
            <person name="Schobel S."/>
            <person name="Town C.D."/>
        </authorList>
    </citation>
    <scope>GENOME REANNOTATION</scope>
    <source>
        <strain>cv. Columbia</strain>
    </source>
</reference>
<reference key="3">
    <citation type="journal article" date="2003" name="Science">
        <title>Empirical analysis of transcriptional activity in the Arabidopsis genome.</title>
        <authorList>
            <person name="Yamada K."/>
            <person name="Lim J."/>
            <person name="Dale J.M."/>
            <person name="Chen H."/>
            <person name="Shinn P."/>
            <person name="Palm C.J."/>
            <person name="Southwick A.M."/>
            <person name="Wu H.C."/>
            <person name="Kim C.J."/>
            <person name="Nguyen M."/>
            <person name="Pham P.K."/>
            <person name="Cheuk R.F."/>
            <person name="Karlin-Newmann G."/>
            <person name="Liu S.X."/>
            <person name="Lam B."/>
            <person name="Sakano H."/>
            <person name="Wu T."/>
            <person name="Yu G."/>
            <person name="Miranda M."/>
            <person name="Quach H.L."/>
            <person name="Tripp M."/>
            <person name="Chang C.H."/>
            <person name="Lee J.M."/>
            <person name="Toriumi M.J."/>
            <person name="Chan M.M."/>
            <person name="Tang C.C."/>
            <person name="Onodera C.S."/>
            <person name="Deng J.M."/>
            <person name="Akiyama K."/>
            <person name="Ansari Y."/>
            <person name="Arakawa T."/>
            <person name="Banh J."/>
            <person name="Banno F."/>
            <person name="Bowser L."/>
            <person name="Brooks S.Y."/>
            <person name="Carninci P."/>
            <person name="Chao Q."/>
            <person name="Choy N."/>
            <person name="Enju A."/>
            <person name="Goldsmith A.D."/>
            <person name="Gurjal M."/>
            <person name="Hansen N.F."/>
            <person name="Hayashizaki Y."/>
            <person name="Johnson-Hopson C."/>
            <person name="Hsuan V.W."/>
            <person name="Iida K."/>
            <person name="Karnes M."/>
            <person name="Khan S."/>
            <person name="Koesema E."/>
            <person name="Ishida J."/>
            <person name="Jiang P.X."/>
            <person name="Jones T."/>
            <person name="Kawai J."/>
            <person name="Kamiya A."/>
            <person name="Meyers C."/>
            <person name="Nakajima M."/>
            <person name="Narusaka M."/>
            <person name="Seki M."/>
            <person name="Sakurai T."/>
            <person name="Satou M."/>
            <person name="Tamse R."/>
            <person name="Vaysberg M."/>
            <person name="Wallender E.K."/>
            <person name="Wong C."/>
            <person name="Yamamura Y."/>
            <person name="Yuan S."/>
            <person name="Shinozaki K."/>
            <person name="Davis R.W."/>
            <person name="Theologis A."/>
            <person name="Ecker J.R."/>
        </authorList>
    </citation>
    <scope>NUCLEOTIDE SEQUENCE [LARGE SCALE MRNA]</scope>
    <source>
        <strain>cv. Columbia</strain>
    </source>
</reference>
<reference key="4">
    <citation type="submission" date="2002-03" db="EMBL/GenBank/DDBJ databases">
        <title>Full-length cDNA from Arabidopsis thaliana.</title>
        <authorList>
            <person name="Brover V.V."/>
            <person name="Troukhan M.E."/>
            <person name="Alexandrov N.A."/>
            <person name="Lu Y.-P."/>
            <person name="Flavell R.B."/>
            <person name="Feldmann K.A."/>
        </authorList>
    </citation>
    <scope>NUCLEOTIDE SEQUENCE [LARGE SCALE MRNA]</scope>
</reference>
<reference key="5">
    <citation type="journal article" date="2006" name="J. Plant Physiol.">
        <title>Use of differential display for the identification of touch-induced genes from an ethylene-insensitive Arabidopsis mutant and partial characterization of these genes.</title>
        <authorList>
            <person name="Chotikacharoensuk T."/>
            <person name="Arteca R.N."/>
            <person name="Arteca J.M."/>
        </authorList>
    </citation>
    <scope>INDUCTION</scope>
</reference>
<reference key="6">
    <citation type="journal article" date="2011" name="Plant Physiol. Biochem.">
        <title>Investigations on N-rich protein (NRP) of Arabidopsis thaliana under different stress conditions.</title>
        <authorList>
            <person name="Hoepflinger M.C."/>
            <person name="Pieslinger A.M."/>
            <person name="Tenhaken R."/>
        </authorList>
    </citation>
    <scope>SUBCELLULAR LOCATION</scope>
    <scope>TISSUE SPECIFICITY</scope>
    <scope>INDUCTION</scope>
    <scope>DISRUPTION PHENOTYPE</scope>
</reference>
<reference key="7">
    <citation type="journal article" date="2017" name="J. Exp. Bot.">
        <title>The asparagine-rich protein NRP interacts with the Verticillium effector PevD1 and regulates the subcellular localization of cryptochrome 2.</title>
        <authorList>
            <person name="Zhou R."/>
            <person name="Zhu T."/>
            <person name="Han L."/>
            <person name="Liu M."/>
            <person name="Xu M."/>
            <person name="Liu Y."/>
            <person name="Han D."/>
            <person name="Qiu D."/>
            <person name="Gong Q."/>
            <person name="Liu X."/>
        </authorList>
    </citation>
    <scope>FUNCTION</scope>
    <scope>INTERACTION WITH CRY2 AND VERTICILLIUM DAHLIAE PEVD1</scope>
    <scope>SUBCELLULAR LOCATION</scope>
</reference>
<reference key="8">
    <citation type="journal article" date="2018" name="Mol. Plant">
        <title>The asparagine-rich protein NRP facilitates the degradation of the PP6-type phosphatase FyPP3 to promote ABA response in Arabidopsis.</title>
        <authorList>
            <person name="Zhu T."/>
            <person name="Wu Y."/>
            <person name="Yang X."/>
            <person name="Chen W."/>
            <person name="Gong Q."/>
            <person name="Liu X."/>
        </authorList>
    </citation>
    <scope>FUNCTION</scope>
    <scope>INTERACTION WITH FYPP3</scope>
    <scope>INDUCTION BY ABSCISIC ACID</scope>
</reference>
<organism>
    <name type="scientific">Arabidopsis thaliana</name>
    <name type="common">Mouse-ear cress</name>
    <dbReference type="NCBI Taxonomy" id="3702"/>
    <lineage>
        <taxon>Eukaryota</taxon>
        <taxon>Viridiplantae</taxon>
        <taxon>Streptophyta</taxon>
        <taxon>Embryophyta</taxon>
        <taxon>Tracheophyta</taxon>
        <taxon>Spermatophyta</taxon>
        <taxon>Magnoliopsida</taxon>
        <taxon>eudicotyledons</taxon>
        <taxon>Gunneridae</taxon>
        <taxon>Pentapetalae</taxon>
        <taxon>rosids</taxon>
        <taxon>malvids</taxon>
        <taxon>Brassicales</taxon>
        <taxon>Brassicaceae</taxon>
        <taxon>Camelineae</taxon>
        <taxon>Arabidopsis</taxon>
    </lineage>
</organism>
<proteinExistence type="evidence at protein level"/>
<keyword id="KW-0963">Cytoplasm</keyword>
<keyword id="KW-1185">Reference proteome</keyword>
<keyword id="KW-0346">Stress response</keyword>
<gene>
    <name evidence="8" type="primary">NRP</name>
    <name evidence="7" type="synonym">GDL</name>
    <name evidence="11" type="ordered locus">At5g42050</name>
    <name evidence="12" type="ORF">MJC20.15</name>
</gene>
<sequence>MEYNNNNQQSFWQFSDQLRVQTPNLANLSLNDSIWSTNSVFKERRNLDIAATTDKNNNQIDYYQKKTTSDNINSNWNWKSSGSNNDMGLGFGPVGSKSTVDLNPIDKFNSPFNDTWKFNSVNVNVNGYSPSSAVNGDFNKGVYTSMKKYGYNVNLKNNNKNKGIDEDHQIQKGGKKNRKNQQNNNNQRNEDDKNNGLDKRFKTLPPAEALPRNETIGGYIFVCNNDTMEENLKRQLFGLPPRYRDSVRAITPGLPLFLYNYSTHQLHGIYEAASFGGTNIELNAFEDKKCPGESRFPAQVRAITRKVCLPLEEDSFRPILHHYDGPKFRLELSVPEVLSLLDIFADQNP</sequence>
<evidence type="ECO:0000255" key="1">
    <source>
        <dbReference type="PROSITE-ProRule" id="PRU00569"/>
    </source>
</evidence>
<evidence type="ECO:0000256" key="2">
    <source>
        <dbReference type="SAM" id="MobiDB-lite"/>
    </source>
</evidence>
<evidence type="ECO:0000269" key="3">
    <source>
    </source>
</evidence>
<evidence type="ECO:0000269" key="4">
    <source>
    </source>
</evidence>
<evidence type="ECO:0000269" key="5">
    <source>
    </source>
</evidence>
<evidence type="ECO:0000269" key="6">
    <source>
    </source>
</evidence>
<evidence type="ECO:0000303" key="7">
    <source>
    </source>
</evidence>
<evidence type="ECO:0000303" key="8">
    <source>
    </source>
</evidence>
<evidence type="ECO:0000305" key="9"/>
<evidence type="ECO:0000305" key="10">
    <source>
    </source>
</evidence>
<evidence type="ECO:0000312" key="11">
    <source>
        <dbReference type="Araport" id="AT5G42050"/>
    </source>
</evidence>
<evidence type="ECO:0000312" key="12">
    <source>
        <dbReference type="EMBL" id="BAB08438.1"/>
    </source>
</evidence>
<name>NRP_ARATH</name>
<dbReference type="EMBL" id="AB017067">
    <property type="protein sequence ID" value="BAB08438.1"/>
    <property type="status" value="ALT_INIT"/>
    <property type="molecule type" value="Genomic_DNA"/>
</dbReference>
<dbReference type="EMBL" id="CP002688">
    <property type="protein sequence ID" value="AED94759.1"/>
    <property type="molecule type" value="Genomic_DNA"/>
</dbReference>
<dbReference type="EMBL" id="AY080773">
    <property type="protein sequence ID" value="AAL87257.1"/>
    <property type="molecule type" value="mRNA"/>
</dbReference>
<dbReference type="EMBL" id="AY114057">
    <property type="protein sequence ID" value="AAM45105.1"/>
    <property type="molecule type" value="mRNA"/>
</dbReference>
<dbReference type="EMBL" id="AY088465">
    <property type="protein sequence ID" value="AAM66001.1"/>
    <property type="molecule type" value="mRNA"/>
</dbReference>
<dbReference type="RefSeq" id="NP_568600.1">
    <property type="nucleotide sequence ID" value="NM_123570.4"/>
</dbReference>
<dbReference type="SMR" id="Q8RXN8"/>
<dbReference type="FunCoup" id="Q8RXN8">
    <property type="interactions" value="776"/>
</dbReference>
<dbReference type="STRING" id="3702.Q8RXN8"/>
<dbReference type="GlyGen" id="Q8RXN8">
    <property type="glycosylation" value="1 site"/>
</dbReference>
<dbReference type="PaxDb" id="3702-AT5G42050.1"/>
<dbReference type="ProteomicsDB" id="187106"/>
<dbReference type="EnsemblPlants" id="AT5G42050.1">
    <property type="protein sequence ID" value="AT5G42050.1"/>
    <property type="gene ID" value="AT5G42050"/>
</dbReference>
<dbReference type="GeneID" id="834210"/>
<dbReference type="Gramene" id="AT5G42050.1">
    <property type="protein sequence ID" value="AT5G42050.1"/>
    <property type="gene ID" value="AT5G42050"/>
</dbReference>
<dbReference type="KEGG" id="ath:AT5G42050"/>
<dbReference type="Araport" id="AT5G42050"/>
<dbReference type="TAIR" id="AT5G42050">
    <property type="gene designation" value="NRP"/>
</dbReference>
<dbReference type="eggNOG" id="ENOG502QSUM">
    <property type="taxonomic scope" value="Eukaryota"/>
</dbReference>
<dbReference type="HOGENOM" id="CLU_051751_0_0_1"/>
<dbReference type="InParanoid" id="Q8RXN8"/>
<dbReference type="OMA" id="IDEDHQI"/>
<dbReference type="PhylomeDB" id="Q8RXN8"/>
<dbReference type="PRO" id="PR:Q8RXN8"/>
<dbReference type="Proteomes" id="UP000006548">
    <property type="component" value="Chromosome 5"/>
</dbReference>
<dbReference type="ExpressionAtlas" id="Q8RXN8">
    <property type="expression patterns" value="baseline and differential"/>
</dbReference>
<dbReference type="GO" id="GO:0005737">
    <property type="term" value="C:cytoplasm"/>
    <property type="evidence" value="ECO:0000314"/>
    <property type="project" value="TAIR"/>
</dbReference>
<dbReference type="GO" id="GO:0071456">
    <property type="term" value="P:cellular response to hypoxia"/>
    <property type="evidence" value="ECO:0007007"/>
    <property type="project" value="TAIR"/>
</dbReference>
<dbReference type="GO" id="GO:1904350">
    <property type="term" value="P:regulation of protein catabolic process in the vacuole"/>
    <property type="evidence" value="ECO:0000316"/>
    <property type="project" value="TAIR"/>
</dbReference>
<dbReference type="GO" id="GO:0034976">
    <property type="term" value="P:response to endoplasmic reticulum stress"/>
    <property type="evidence" value="ECO:0000316"/>
    <property type="project" value="TAIR"/>
</dbReference>
<dbReference type="GO" id="GO:1902074">
    <property type="term" value="P:response to salt"/>
    <property type="evidence" value="ECO:0000315"/>
    <property type="project" value="UniProtKB"/>
</dbReference>
<dbReference type="InterPro" id="IPR013989">
    <property type="entry name" value="Dev_and_cell_death_domain"/>
</dbReference>
<dbReference type="InterPro" id="IPR044832">
    <property type="entry name" value="NRP-like"/>
</dbReference>
<dbReference type="PANTHER" id="PTHR46034">
    <property type="match status" value="1"/>
</dbReference>
<dbReference type="PANTHER" id="PTHR46034:SF37">
    <property type="entry name" value="DCD DOMAIN-CONTAINING PROTEIN NRP"/>
    <property type="match status" value="1"/>
</dbReference>
<dbReference type="Pfam" id="PF10539">
    <property type="entry name" value="Dev_Cell_Death"/>
    <property type="match status" value="1"/>
</dbReference>
<dbReference type="SMART" id="SM00767">
    <property type="entry name" value="DCD"/>
    <property type="match status" value="1"/>
</dbReference>
<dbReference type="PROSITE" id="PS51222">
    <property type="entry name" value="DCD"/>
    <property type="match status" value="1"/>
</dbReference>
<accession>Q8RXN8</accession>
<accession>Q9FHX9</accession>